<proteinExistence type="inferred from homology"/>
<feature type="chain" id="PRO_0000171219" description="Serine/threonine-protein kinase PknI">
    <location>
        <begin position="1"/>
        <end position="585"/>
    </location>
</feature>
<feature type="topological domain" description="Cytoplasmic" evidence="1">
    <location>
        <begin position="1"/>
        <end position="349"/>
    </location>
</feature>
<feature type="transmembrane region" description="Helical" evidence="2">
    <location>
        <begin position="350"/>
        <end position="370"/>
    </location>
</feature>
<feature type="topological domain" description="Extracellular" evidence="1">
    <location>
        <begin position="371"/>
        <end position="585"/>
    </location>
</feature>
<feature type="domain" description="Protein kinase" evidence="3">
    <location>
        <begin position="12"/>
        <end position="252"/>
    </location>
</feature>
<feature type="region of interest" description="Disordered" evidence="4">
    <location>
        <begin position="546"/>
        <end position="585"/>
    </location>
</feature>
<feature type="compositionally biased region" description="Low complexity" evidence="4">
    <location>
        <begin position="554"/>
        <end position="585"/>
    </location>
</feature>
<feature type="active site" description="Proton acceptor" evidence="3">
    <location>
        <position position="137"/>
    </location>
</feature>
<feature type="binding site" evidence="3">
    <location>
        <begin position="18"/>
        <end position="26"/>
    </location>
    <ligand>
        <name>ATP</name>
        <dbReference type="ChEBI" id="CHEBI:30616"/>
    </ligand>
</feature>
<feature type="binding site" evidence="1">
    <location>
        <position position="41"/>
    </location>
    <ligand>
        <name>ADP</name>
        <dbReference type="ChEBI" id="CHEBI:456216"/>
    </ligand>
</feature>
<feature type="binding site" evidence="3">
    <location>
        <position position="41"/>
    </location>
    <ligand>
        <name>ATP</name>
        <dbReference type="ChEBI" id="CHEBI:30616"/>
    </ligand>
</feature>
<feature type="binding site" evidence="1">
    <location>
        <position position="90"/>
    </location>
    <ligand>
        <name>ADP</name>
        <dbReference type="ChEBI" id="CHEBI:456216"/>
    </ligand>
</feature>
<feature type="binding site" evidence="1">
    <location>
        <position position="92"/>
    </location>
    <ligand>
        <name>ADP</name>
        <dbReference type="ChEBI" id="CHEBI:456216"/>
    </ligand>
</feature>
<protein>
    <recommendedName>
        <fullName evidence="1">Serine/threonine-protein kinase PknI</fullName>
        <ecNumber evidence="1">2.7.11.1</ecNumber>
    </recommendedName>
</protein>
<organism>
    <name type="scientific">Mycobacterium bovis (strain ATCC BAA-935 / AF2122/97)</name>
    <dbReference type="NCBI Taxonomy" id="233413"/>
    <lineage>
        <taxon>Bacteria</taxon>
        <taxon>Bacillati</taxon>
        <taxon>Actinomycetota</taxon>
        <taxon>Actinomycetes</taxon>
        <taxon>Mycobacteriales</taxon>
        <taxon>Mycobacteriaceae</taxon>
        <taxon>Mycobacterium</taxon>
        <taxon>Mycobacterium tuberculosis complex</taxon>
    </lineage>
</organism>
<sequence length="585" mass="61805">MALASGVTFAGYTVVRMLGCSAMGEVYLVQHPGFPGWQALKVLSPAMAADDEFRRRFQRETEVAARLFHPHILEVHDRGEFDGQLWIAMDYVDGIDATQHMADRFPAVLPVGEVLAIVTAVAGALDYAHQRGLLHRDVNPANVVLTSQSAGDQRILLADFGIASQPSYPAPELSAGADVDGRADQYALALTAIHLFAGAPPVDRSHTGPLQPPKLSAFRPDLARLDGVLSRALATAPADRFGSCREFADAMNEQAGVAIADQSSGGVDASEVTAAAGEEAYVVDYPAYGWPEAVDCKEPSARAPAPAAPTPQRRGSMLQSAAGVLARRLDNFSTATKAPASPTRRRPRRILVGAVAVLLLAGLFAVGIVIGRKTNTTATEVARPPTSGSAVPSAPTTTVAVTAPVPLDGTYRIEIQRSKQTYDYTPTPQPPDVNTWWAFRTSCTPTECLAAATMLDDNDHTQAKTPPVRPFLMQFGEGQWKSRPETVQFPCVGPNGSPSTQATTQLLALRPQPQGDLVGEMVVTVHSNECGQQGAVIRIPAVASRSGDLPPAVTVPDPATIPDTPDTTSTATLTPPTTTAPGPGR</sequence>
<evidence type="ECO:0000250" key="1">
    <source>
        <dbReference type="UniProtKB" id="P9WI69"/>
    </source>
</evidence>
<evidence type="ECO:0000255" key="2"/>
<evidence type="ECO:0000255" key="3">
    <source>
        <dbReference type="PROSITE-ProRule" id="PRU00159"/>
    </source>
</evidence>
<evidence type="ECO:0000256" key="4">
    <source>
        <dbReference type="SAM" id="MobiDB-lite"/>
    </source>
</evidence>
<accession>P65731</accession>
<accession>A0A1R3Y2J8</accession>
<accession>Q10964</accession>
<accession>X2BMF5</accession>
<reference key="1">
    <citation type="journal article" date="2003" name="Proc. Natl. Acad. Sci. U.S.A.">
        <title>The complete genome sequence of Mycobacterium bovis.</title>
        <authorList>
            <person name="Garnier T."/>
            <person name="Eiglmeier K."/>
            <person name="Camus J.-C."/>
            <person name="Medina N."/>
            <person name="Mansoor H."/>
            <person name="Pryor M."/>
            <person name="Duthoy S."/>
            <person name="Grondin S."/>
            <person name="Lacroix C."/>
            <person name="Monsempe C."/>
            <person name="Simon S."/>
            <person name="Harris B."/>
            <person name="Atkin R."/>
            <person name="Doggett J."/>
            <person name="Mayes R."/>
            <person name="Keating L."/>
            <person name="Wheeler P.R."/>
            <person name="Parkhill J."/>
            <person name="Barrell B.G."/>
            <person name="Cole S.T."/>
            <person name="Gordon S.V."/>
            <person name="Hewinson R.G."/>
        </authorList>
    </citation>
    <scope>NUCLEOTIDE SEQUENCE [LARGE SCALE GENOMIC DNA]</scope>
    <source>
        <strain>ATCC BAA-935 / AF2122/97</strain>
    </source>
</reference>
<reference key="2">
    <citation type="journal article" date="2017" name="Genome Announc.">
        <title>Updated reference genome sequence and annotation of Mycobacterium bovis AF2122/97.</title>
        <authorList>
            <person name="Malone K.M."/>
            <person name="Farrell D."/>
            <person name="Stuber T.P."/>
            <person name="Schubert O.T."/>
            <person name="Aebersold R."/>
            <person name="Robbe-Austerman S."/>
            <person name="Gordon S.V."/>
        </authorList>
    </citation>
    <scope>NUCLEOTIDE SEQUENCE [LARGE SCALE GENOMIC DNA]</scope>
    <scope>GENOME REANNOTATION</scope>
    <source>
        <strain>ATCC BAA-935 / AF2122/97</strain>
    </source>
</reference>
<comment type="function">
    <text evidence="1">Plays an important role in slowing down the growth of mycobacteria within the infected host.</text>
</comment>
<comment type="catalytic activity">
    <reaction evidence="1">
        <text>L-seryl-[protein] + ATP = O-phospho-L-seryl-[protein] + ADP + H(+)</text>
        <dbReference type="Rhea" id="RHEA:17989"/>
        <dbReference type="Rhea" id="RHEA-COMP:9863"/>
        <dbReference type="Rhea" id="RHEA-COMP:11604"/>
        <dbReference type="ChEBI" id="CHEBI:15378"/>
        <dbReference type="ChEBI" id="CHEBI:29999"/>
        <dbReference type="ChEBI" id="CHEBI:30616"/>
        <dbReference type="ChEBI" id="CHEBI:83421"/>
        <dbReference type="ChEBI" id="CHEBI:456216"/>
        <dbReference type="EC" id="2.7.11.1"/>
    </reaction>
</comment>
<comment type="catalytic activity">
    <reaction evidence="1">
        <text>L-threonyl-[protein] + ATP = O-phospho-L-threonyl-[protein] + ADP + H(+)</text>
        <dbReference type="Rhea" id="RHEA:46608"/>
        <dbReference type="Rhea" id="RHEA-COMP:11060"/>
        <dbReference type="Rhea" id="RHEA-COMP:11605"/>
        <dbReference type="ChEBI" id="CHEBI:15378"/>
        <dbReference type="ChEBI" id="CHEBI:30013"/>
        <dbReference type="ChEBI" id="CHEBI:30616"/>
        <dbReference type="ChEBI" id="CHEBI:61977"/>
        <dbReference type="ChEBI" id="CHEBI:456216"/>
        <dbReference type="EC" id="2.7.11.1"/>
    </reaction>
</comment>
<comment type="cofactor">
    <cofactor evidence="1">
        <name>Mn(2+)</name>
        <dbReference type="ChEBI" id="CHEBI:29035"/>
    </cofactor>
</comment>
<comment type="subcellular location">
    <subcellularLocation>
        <location evidence="1">Cytoplasm</location>
    </subcellularLocation>
    <subcellularLocation>
        <location evidence="1">Cell membrane</location>
        <topology evidence="2">Single-pass membrane protein</topology>
    </subcellularLocation>
</comment>
<comment type="PTM">
    <text evidence="1">Autophosphorylated at serine and threonine residues.</text>
</comment>
<comment type="similarity">
    <text evidence="3">Belongs to the protein kinase superfamily. Ser/Thr protein kinase family.</text>
</comment>
<name>PKNI_MYCBO</name>
<keyword id="KW-0067">ATP-binding</keyword>
<keyword id="KW-1003">Cell membrane</keyword>
<keyword id="KW-0963">Cytoplasm</keyword>
<keyword id="KW-0418">Kinase</keyword>
<keyword id="KW-0472">Membrane</keyword>
<keyword id="KW-0547">Nucleotide-binding</keyword>
<keyword id="KW-1185">Reference proteome</keyword>
<keyword id="KW-0723">Serine/threonine-protein kinase</keyword>
<keyword id="KW-0808">Transferase</keyword>
<keyword id="KW-0812">Transmembrane</keyword>
<keyword id="KW-1133">Transmembrane helix</keyword>
<keyword id="KW-0843">Virulence</keyword>
<dbReference type="EC" id="2.7.11.1" evidence="1"/>
<dbReference type="EMBL" id="LT708304">
    <property type="protein sequence ID" value="SIU01559.1"/>
    <property type="molecule type" value="Genomic_DNA"/>
</dbReference>
<dbReference type="RefSeq" id="NP_856583.1">
    <property type="nucleotide sequence ID" value="NC_002945.3"/>
</dbReference>
<dbReference type="RefSeq" id="WP_003900593.1">
    <property type="nucleotide sequence ID" value="NC_002945.4"/>
</dbReference>
<dbReference type="SMR" id="P65731"/>
<dbReference type="GeneID" id="45426901"/>
<dbReference type="KEGG" id="mbo:BQ2027_MB2938C"/>
<dbReference type="PATRIC" id="fig|233413.5.peg.3224"/>
<dbReference type="Proteomes" id="UP000001419">
    <property type="component" value="Chromosome"/>
</dbReference>
<dbReference type="GO" id="GO:0005737">
    <property type="term" value="C:cytoplasm"/>
    <property type="evidence" value="ECO:0007669"/>
    <property type="project" value="UniProtKB-SubCell"/>
</dbReference>
<dbReference type="GO" id="GO:0005886">
    <property type="term" value="C:plasma membrane"/>
    <property type="evidence" value="ECO:0007669"/>
    <property type="project" value="UniProtKB-SubCell"/>
</dbReference>
<dbReference type="GO" id="GO:0005524">
    <property type="term" value="F:ATP binding"/>
    <property type="evidence" value="ECO:0007669"/>
    <property type="project" value="UniProtKB-KW"/>
</dbReference>
<dbReference type="GO" id="GO:0106310">
    <property type="term" value="F:protein serine kinase activity"/>
    <property type="evidence" value="ECO:0007669"/>
    <property type="project" value="RHEA"/>
</dbReference>
<dbReference type="GO" id="GO:0004674">
    <property type="term" value="F:protein serine/threonine kinase activity"/>
    <property type="evidence" value="ECO:0007669"/>
    <property type="project" value="UniProtKB-KW"/>
</dbReference>
<dbReference type="CDD" id="cd14014">
    <property type="entry name" value="STKc_PknB_like"/>
    <property type="match status" value="1"/>
</dbReference>
<dbReference type="FunFam" id="3.30.200.20:FF:000035">
    <property type="entry name" value="Serine/threonine protein kinase Stk1"/>
    <property type="match status" value="1"/>
</dbReference>
<dbReference type="Gene3D" id="3.30.200.20">
    <property type="entry name" value="Phosphorylase Kinase, domain 1"/>
    <property type="match status" value="1"/>
</dbReference>
<dbReference type="Gene3D" id="1.10.510.10">
    <property type="entry name" value="Transferase(Phosphotransferase) domain 1"/>
    <property type="match status" value="1"/>
</dbReference>
<dbReference type="InterPro" id="IPR011009">
    <property type="entry name" value="Kinase-like_dom_sf"/>
</dbReference>
<dbReference type="InterPro" id="IPR000719">
    <property type="entry name" value="Prot_kinase_dom"/>
</dbReference>
<dbReference type="PANTHER" id="PTHR43289">
    <property type="entry name" value="MITOGEN-ACTIVATED PROTEIN KINASE KINASE KINASE 20-RELATED"/>
    <property type="match status" value="1"/>
</dbReference>
<dbReference type="PANTHER" id="PTHR43289:SF6">
    <property type="entry name" value="SERINE_THREONINE-PROTEIN KINASE NEKL-3"/>
    <property type="match status" value="1"/>
</dbReference>
<dbReference type="Pfam" id="PF00069">
    <property type="entry name" value="Pkinase"/>
    <property type="match status" value="1"/>
</dbReference>
<dbReference type="SUPFAM" id="SSF56112">
    <property type="entry name" value="Protein kinase-like (PK-like)"/>
    <property type="match status" value="1"/>
</dbReference>
<dbReference type="PROSITE" id="PS50011">
    <property type="entry name" value="PROTEIN_KINASE_DOM"/>
    <property type="match status" value="1"/>
</dbReference>
<gene>
    <name type="primary">pknI</name>
    <name type="ordered locus">BQ2027_MB2938C</name>
</gene>